<accession>Q63QW9</accession>
<sequence>MQTGHPADGVYFGLMSGTSMDGVDGIAVRFEAGKPPAVLSEAFVGFADTLRDALFALQQPGDDEIEREALAANALAARYAVCCHELLRTAGLSPDDVRALGVHGQTVRHRPERGYTRQLNNAALLAELTRIDVIADFRSRDVAAGGQGAPLVPAFHATVFGSPDETRVVCNLGGISNITILPAGGGPQGEGHARNDTVRGHDCGPANALIDAWVERHLKQPFDDGGRFAARGKVDETLLAALLDEPYFRQNAPKSTGRDLFNADWLDAKLAGFQHLAPENVQATLTALTAATVADEIARHAGDCRAVYVCGGGARNPVLLDALATALAARGLDAAVATTAALGVPPQQVESLAFAWLAYRFNARAPGNVSTVTGAAGERVLGALYPR</sequence>
<organism>
    <name type="scientific">Burkholderia pseudomallei (strain K96243)</name>
    <dbReference type="NCBI Taxonomy" id="272560"/>
    <lineage>
        <taxon>Bacteria</taxon>
        <taxon>Pseudomonadati</taxon>
        <taxon>Pseudomonadota</taxon>
        <taxon>Betaproteobacteria</taxon>
        <taxon>Burkholderiales</taxon>
        <taxon>Burkholderiaceae</taxon>
        <taxon>Burkholderia</taxon>
        <taxon>pseudomallei group</taxon>
    </lineage>
</organism>
<gene>
    <name evidence="1" type="primary">anmK</name>
    <name type="ordered locus">BPSL2905</name>
</gene>
<keyword id="KW-0067">ATP-binding</keyword>
<keyword id="KW-0119">Carbohydrate metabolism</keyword>
<keyword id="KW-0418">Kinase</keyword>
<keyword id="KW-0547">Nucleotide-binding</keyword>
<keyword id="KW-1185">Reference proteome</keyword>
<keyword id="KW-0808">Transferase</keyword>
<name>ANMK_BURPS</name>
<reference key="1">
    <citation type="journal article" date="2004" name="Proc. Natl. Acad. Sci. U.S.A.">
        <title>Genomic plasticity of the causative agent of melioidosis, Burkholderia pseudomallei.</title>
        <authorList>
            <person name="Holden M.T.G."/>
            <person name="Titball R.W."/>
            <person name="Peacock S.J."/>
            <person name="Cerdeno-Tarraga A.-M."/>
            <person name="Atkins T."/>
            <person name="Crossman L.C."/>
            <person name="Pitt T."/>
            <person name="Churcher C."/>
            <person name="Mungall K.L."/>
            <person name="Bentley S.D."/>
            <person name="Sebaihia M."/>
            <person name="Thomson N.R."/>
            <person name="Bason N."/>
            <person name="Beacham I.R."/>
            <person name="Brooks K."/>
            <person name="Brown K.A."/>
            <person name="Brown N.F."/>
            <person name="Challis G.L."/>
            <person name="Cherevach I."/>
            <person name="Chillingworth T."/>
            <person name="Cronin A."/>
            <person name="Crossett B."/>
            <person name="Davis P."/>
            <person name="DeShazer D."/>
            <person name="Feltwell T."/>
            <person name="Fraser A."/>
            <person name="Hance Z."/>
            <person name="Hauser H."/>
            <person name="Holroyd S."/>
            <person name="Jagels K."/>
            <person name="Keith K.E."/>
            <person name="Maddison M."/>
            <person name="Moule S."/>
            <person name="Price C."/>
            <person name="Quail M.A."/>
            <person name="Rabbinowitsch E."/>
            <person name="Rutherford K."/>
            <person name="Sanders M."/>
            <person name="Simmonds M."/>
            <person name="Songsivilai S."/>
            <person name="Stevens K."/>
            <person name="Tumapa S."/>
            <person name="Vesaratchavest M."/>
            <person name="Whitehead S."/>
            <person name="Yeats C."/>
            <person name="Barrell B.G."/>
            <person name="Oyston P.C.F."/>
            <person name="Parkhill J."/>
        </authorList>
    </citation>
    <scope>NUCLEOTIDE SEQUENCE [LARGE SCALE GENOMIC DNA]</scope>
    <source>
        <strain>K96243</strain>
    </source>
</reference>
<comment type="function">
    <text evidence="1">Catalyzes the specific phosphorylation of 1,6-anhydro-N-acetylmuramic acid (anhMurNAc) with the simultaneous cleavage of the 1,6-anhydro ring, generating MurNAc-6-P. Is required for the utilization of anhMurNAc either imported from the medium or derived from its own cell wall murein, and thus plays a role in cell wall recycling.</text>
</comment>
<comment type="catalytic activity">
    <reaction evidence="1">
        <text>1,6-anhydro-N-acetyl-beta-muramate + ATP + H2O = N-acetyl-D-muramate 6-phosphate + ADP + H(+)</text>
        <dbReference type="Rhea" id="RHEA:24952"/>
        <dbReference type="ChEBI" id="CHEBI:15377"/>
        <dbReference type="ChEBI" id="CHEBI:15378"/>
        <dbReference type="ChEBI" id="CHEBI:30616"/>
        <dbReference type="ChEBI" id="CHEBI:58690"/>
        <dbReference type="ChEBI" id="CHEBI:58722"/>
        <dbReference type="ChEBI" id="CHEBI:456216"/>
        <dbReference type="EC" id="2.7.1.170"/>
    </reaction>
</comment>
<comment type="pathway">
    <text evidence="1">Amino-sugar metabolism; 1,6-anhydro-N-acetylmuramate degradation.</text>
</comment>
<comment type="pathway">
    <text evidence="1">Cell wall biogenesis; peptidoglycan recycling.</text>
</comment>
<comment type="similarity">
    <text evidence="1">Belongs to the anhydro-N-acetylmuramic acid kinase family.</text>
</comment>
<comment type="sequence caution" evidence="2">
    <conflict type="erroneous initiation">
        <sequence resource="EMBL-CDS" id="CAH36915"/>
    </conflict>
</comment>
<evidence type="ECO:0000255" key="1">
    <source>
        <dbReference type="HAMAP-Rule" id="MF_01270"/>
    </source>
</evidence>
<evidence type="ECO:0000305" key="2"/>
<proteinExistence type="inferred from homology"/>
<dbReference type="EC" id="2.7.1.170" evidence="1"/>
<dbReference type="EMBL" id="BX571965">
    <property type="protein sequence ID" value="CAH36915.1"/>
    <property type="status" value="ALT_INIT"/>
    <property type="molecule type" value="Genomic_DNA"/>
</dbReference>
<dbReference type="RefSeq" id="WP_004533564.1">
    <property type="nucleotide sequence ID" value="NZ_CP009538.1"/>
</dbReference>
<dbReference type="RefSeq" id="YP_109499.1">
    <property type="nucleotide sequence ID" value="NC_006350.1"/>
</dbReference>
<dbReference type="SMR" id="Q63QW9"/>
<dbReference type="STRING" id="272560.BPSL2905"/>
<dbReference type="KEGG" id="bps:BPSL2905"/>
<dbReference type="PATRIC" id="fig|272560.51.peg.2384"/>
<dbReference type="eggNOG" id="COG2377">
    <property type="taxonomic scope" value="Bacteria"/>
</dbReference>
<dbReference type="UniPathway" id="UPA00343"/>
<dbReference type="UniPathway" id="UPA00544"/>
<dbReference type="Proteomes" id="UP000000605">
    <property type="component" value="Chromosome 1"/>
</dbReference>
<dbReference type="GO" id="GO:0005524">
    <property type="term" value="F:ATP binding"/>
    <property type="evidence" value="ECO:0007669"/>
    <property type="project" value="UniProtKB-UniRule"/>
</dbReference>
<dbReference type="GO" id="GO:0016301">
    <property type="term" value="F:kinase activity"/>
    <property type="evidence" value="ECO:0007669"/>
    <property type="project" value="UniProtKB-KW"/>
</dbReference>
<dbReference type="GO" id="GO:0016773">
    <property type="term" value="F:phosphotransferase activity, alcohol group as acceptor"/>
    <property type="evidence" value="ECO:0007669"/>
    <property type="project" value="UniProtKB-UniRule"/>
</dbReference>
<dbReference type="GO" id="GO:0097175">
    <property type="term" value="P:1,6-anhydro-N-acetyl-beta-muramic acid catabolic process"/>
    <property type="evidence" value="ECO:0007669"/>
    <property type="project" value="UniProtKB-UniRule"/>
</dbReference>
<dbReference type="GO" id="GO:0006040">
    <property type="term" value="P:amino sugar metabolic process"/>
    <property type="evidence" value="ECO:0007669"/>
    <property type="project" value="InterPro"/>
</dbReference>
<dbReference type="GO" id="GO:0009254">
    <property type="term" value="P:peptidoglycan turnover"/>
    <property type="evidence" value="ECO:0007669"/>
    <property type="project" value="UniProtKB-UniRule"/>
</dbReference>
<dbReference type="Gene3D" id="3.30.420.40">
    <property type="match status" value="2"/>
</dbReference>
<dbReference type="HAMAP" id="MF_01270">
    <property type="entry name" value="AnhMurNAc_kinase"/>
    <property type="match status" value="1"/>
</dbReference>
<dbReference type="InterPro" id="IPR005338">
    <property type="entry name" value="Anhydro_N_Ac-Mur_kinase"/>
</dbReference>
<dbReference type="InterPro" id="IPR043129">
    <property type="entry name" value="ATPase_NBD"/>
</dbReference>
<dbReference type="NCBIfam" id="NF007139">
    <property type="entry name" value="PRK09585.1-3"/>
    <property type="match status" value="1"/>
</dbReference>
<dbReference type="NCBIfam" id="NF007140">
    <property type="entry name" value="PRK09585.1-4"/>
    <property type="match status" value="1"/>
</dbReference>
<dbReference type="PANTHER" id="PTHR30605">
    <property type="entry name" value="ANHYDRO-N-ACETYLMURAMIC ACID KINASE"/>
    <property type="match status" value="1"/>
</dbReference>
<dbReference type="PANTHER" id="PTHR30605:SF0">
    <property type="entry name" value="ANHYDRO-N-ACETYLMURAMIC ACID KINASE"/>
    <property type="match status" value="1"/>
</dbReference>
<dbReference type="Pfam" id="PF03702">
    <property type="entry name" value="AnmK"/>
    <property type="match status" value="1"/>
</dbReference>
<dbReference type="SUPFAM" id="SSF53067">
    <property type="entry name" value="Actin-like ATPase domain"/>
    <property type="match status" value="1"/>
</dbReference>
<protein>
    <recommendedName>
        <fullName evidence="1">Anhydro-N-acetylmuramic acid kinase</fullName>
        <ecNumber evidence="1">2.7.1.170</ecNumber>
    </recommendedName>
    <alternativeName>
        <fullName evidence="1">AnhMurNAc kinase</fullName>
    </alternativeName>
</protein>
<feature type="chain" id="PRO_0000249986" description="Anhydro-N-acetylmuramic acid kinase">
    <location>
        <begin position="1"/>
        <end position="387"/>
    </location>
</feature>
<feature type="binding site" evidence="1">
    <location>
        <begin position="17"/>
        <end position="24"/>
    </location>
    <ligand>
        <name>ATP</name>
        <dbReference type="ChEBI" id="CHEBI:30616"/>
    </ligand>
</feature>